<name>MTNX_BACAN</name>
<proteinExistence type="inferred from homology"/>
<comment type="function">
    <text evidence="1">Dephosphorylates 2-hydroxy-3-keto-5-methylthiopentenyl-1-phosphate (HK-MTPenyl-1-P) yielding 1,2-dihydroxy-3-keto-5-methylthiopentene (DHK-MTPene).</text>
</comment>
<comment type="catalytic activity">
    <reaction evidence="1">
        <text>2-hydroxy-5-methylsulfanyl-3-oxopent-1-enyl phosphate + H2O = 1,2-dihydroxy-5-(methylsulfanyl)pent-1-en-3-one + phosphate</text>
        <dbReference type="Rhea" id="RHEA:14481"/>
        <dbReference type="ChEBI" id="CHEBI:15377"/>
        <dbReference type="ChEBI" id="CHEBI:43474"/>
        <dbReference type="ChEBI" id="CHEBI:49252"/>
        <dbReference type="ChEBI" id="CHEBI:59505"/>
        <dbReference type="EC" id="3.1.3.87"/>
    </reaction>
</comment>
<comment type="pathway">
    <text evidence="1">Amino-acid biosynthesis; L-methionine biosynthesis via salvage pathway; L-methionine from S-methyl-5-thio-alpha-D-ribose 1-phosphate: step 4/6.</text>
</comment>
<comment type="similarity">
    <text evidence="1">Belongs to the HAD-like hydrolase superfamily. MtnX family.</text>
</comment>
<protein>
    <recommendedName>
        <fullName evidence="1">2-hydroxy-3-keto-5-methylthiopentenyl-1-phosphate phosphatase</fullName>
        <shortName evidence="1">HK-MTPenyl-1-P phosphatase</shortName>
        <ecNumber evidence="1">3.1.3.87</ecNumber>
    </recommendedName>
</protein>
<evidence type="ECO:0000255" key="1">
    <source>
        <dbReference type="HAMAP-Rule" id="MF_01680"/>
    </source>
</evidence>
<sequence length="219" mass="25290">MSIQVFCDFDGTITNNDNIMSIMEKFAPPEAEEVKNRILSQELSIQEGVSQLFQLIPTNLHDEIIQFLIETAEIRNGFHEFIQFVNENNISFYVISGGMDFFVYPLLQGLIPKEQIYCNETDFSNEYITVNWPHPCDRLCQNHCGLCKSSLIRKLSDTNDFHIVIGDSITDLQAAKQADKVFARDFLITKCEENHISYTPFETFHDVKTELKHLLEVKL</sequence>
<feature type="chain" id="PRO_0000357475" description="2-hydroxy-3-keto-5-methylthiopentenyl-1-phosphate phosphatase">
    <location>
        <begin position="1"/>
        <end position="219"/>
    </location>
</feature>
<reference key="1">
    <citation type="journal article" date="2003" name="Nature">
        <title>The genome sequence of Bacillus anthracis Ames and comparison to closely related bacteria.</title>
        <authorList>
            <person name="Read T.D."/>
            <person name="Peterson S.N."/>
            <person name="Tourasse N.J."/>
            <person name="Baillie L.W."/>
            <person name="Paulsen I.T."/>
            <person name="Nelson K.E."/>
            <person name="Tettelin H."/>
            <person name="Fouts D.E."/>
            <person name="Eisen J.A."/>
            <person name="Gill S.R."/>
            <person name="Holtzapple E.K."/>
            <person name="Okstad O.A."/>
            <person name="Helgason E."/>
            <person name="Rilstone J."/>
            <person name="Wu M."/>
            <person name="Kolonay J.F."/>
            <person name="Beanan M.J."/>
            <person name="Dodson R.J."/>
            <person name="Brinkac L.M."/>
            <person name="Gwinn M.L."/>
            <person name="DeBoy R.T."/>
            <person name="Madpu R."/>
            <person name="Daugherty S.C."/>
            <person name="Durkin A.S."/>
            <person name="Haft D.H."/>
            <person name="Nelson W.C."/>
            <person name="Peterson J.D."/>
            <person name="Pop M."/>
            <person name="Khouri H.M."/>
            <person name="Radune D."/>
            <person name="Benton J.L."/>
            <person name="Mahamoud Y."/>
            <person name="Jiang L."/>
            <person name="Hance I.R."/>
            <person name="Weidman J.F."/>
            <person name="Berry K.J."/>
            <person name="Plaut R.D."/>
            <person name="Wolf A.M."/>
            <person name="Watkins K.L."/>
            <person name="Nierman W.C."/>
            <person name="Hazen A."/>
            <person name="Cline R.T."/>
            <person name="Redmond C."/>
            <person name="Thwaite J.E."/>
            <person name="White O."/>
            <person name="Salzberg S.L."/>
            <person name="Thomason B."/>
            <person name="Friedlander A.M."/>
            <person name="Koehler T.M."/>
            <person name="Hanna P.C."/>
            <person name="Kolstoe A.-B."/>
            <person name="Fraser C.M."/>
        </authorList>
    </citation>
    <scope>NUCLEOTIDE SEQUENCE [LARGE SCALE GENOMIC DNA]</scope>
    <source>
        <strain>Ames / isolate Porton</strain>
    </source>
</reference>
<reference key="2">
    <citation type="submission" date="2004-01" db="EMBL/GenBank/DDBJ databases">
        <title>Complete genome sequence of Bacillus anthracis Sterne.</title>
        <authorList>
            <person name="Brettin T.S."/>
            <person name="Bruce D."/>
            <person name="Challacombe J.F."/>
            <person name="Gilna P."/>
            <person name="Han C."/>
            <person name="Hill K."/>
            <person name="Hitchcock P."/>
            <person name="Jackson P."/>
            <person name="Keim P."/>
            <person name="Longmire J."/>
            <person name="Lucas S."/>
            <person name="Okinaka R."/>
            <person name="Richardson P."/>
            <person name="Rubin E."/>
            <person name="Tice H."/>
        </authorList>
    </citation>
    <scope>NUCLEOTIDE SEQUENCE [LARGE SCALE GENOMIC DNA]</scope>
    <source>
        <strain>Sterne</strain>
    </source>
</reference>
<reference key="3">
    <citation type="journal article" date="2009" name="J. Bacteriol.">
        <title>The complete genome sequence of Bacillus anthracis Ames 'Ancestor'.</title>
        <authorList>
            <person name="Ravel J."/>
            <person name="Jiang L."/>
            <person name="Stanley S.T."/>
            <person name="Wilson M.R."/>
            <person name="Decker R.S."/>
            <person name="Read T.D."/>
            <person name="Worsham P."/>
            <person name="Keim P.S."/>
            <person name="Salzberg S.L."/>
            <person name="Fraser-Liggett C.M."/>
            <person name="Rasko D.A."/>
        </authorList>
    </citation>
    <scope>NUCLEOTIDE SEQUENCE [LARGE SCALE GENOMIC DNA]</scope>
    <source>
        <strain>Ames ancestor</strain>
    </source>
</reference>
<gene>
    <name evidence="1" type="primary">mtnX</name>
    <name type="ordered locus">BA_4256</name>
    <name type="ordered locus">GBAA_4256</name>
    <name type="ordered locus">BAS3947</name>
</gene>
<accession>Q81MJ1</accession>
<accession>Q6HTZ1</accession>
<accession>Q6KN71</accession>
<keyword id="KW-0028">Amino-acid biosynthesis</keyword>
<keyword id="KW-0378">Hydrolase</keyword>
<keyword id="KW-0486">Methionine biosynthesis</keyword>
<keyword id="KW-1185">Reference proteome</keyword>
<organism>
    <name type="scientific">Bacillus anthracis</name>
    <dbReference type="NCBI Taxonomy" id="1392"/>
    <lineage>
        <taxon>Bacteria</taxon>
        <taxon>Bacillati</taxon>
        <taxon>Bacillota</taxon>
        <taxon>Bacilli</taxon>
        <taxon>Bacillales</taxon>
        <taxon>Bacillaceae</taxon>
        <taxon>Bacillus</taxon>
        <taxon>Bacillus cereus group</taxon>
    </lineage>
</organism>
<dbReference type="EC" id="3.1.3.87" evidence="1"/>
<dbReference type="EMBL" id="AE016879">
    <property type="protein sequence ID" value="AAP27977.1"/>
    <property type="molecule type" value="Genomic_DNA"/>
</dbReference>
<dbReference type="EMBL" id="AE017334">
    <property type="protein sequence ID" value="AAT33373.1"/>
    <property type="molecule type" value="Genomic_DNA"/>
</dbReference>
<dbReference type="EMBL" id="AE017225">
    <property type="protein sequence ID" value="AAT56248.1"/>
    <property type="molecule type" value="Genomic_DNA"/>
</dbReference>
<dbReference type="RefSeq" id="NP_846491.1">
    <property type="nucleotide sequence ID" value="NC_003997.3"/>
</dbReference>
<dbReference type="RefSeq" id="WP_000027476.1">
    <property type="nucleotide sequence ID" value="NZ_WXXJ01000027.1"/>
</dbReference>
<dbReference type="RefSeq" id="YP_030197.1">
    <property type="nucleotide sequence ID" value="NC_005945.1"/>
</dbReference>
<dbReference type="SMR" id="Q81MJ1"/>
<dbReference type="STRING" id="261594.GBAA_4256"/>
<dbReference type="DNASU" id="1088838"/>
<dbReference type="GeneID" id="45023927"/>
<dbReference type="KEGG" id="ban:BA_4256"/>
<dbReference type="KEGG" id="banh:HYU01_20795"/>
<dbReference type="KEGG" id="bar:GBAA_4256"/>
<dbReference type="KEGG" id="bat:BAS3947"/>
<dbReference type="PATRIC" id="fig|198094.11.peg.4226"/>
<dbReference type="eggNOG" id="COG4359">
    <property type="taxonomic scope" value="Bacteria"/>
</dbReference>
<dbReference type="HOGENOM" id="CLU_058495_2_1_9"/>
<dbReference type="OMA" id="VPFHEFD"/>
<dbReference type="OrthoDB" id="9804940at2"/>
<dbReference type="UniPathway" id="UPA00904">
    <property type="reaction ID" value="UER00877"/>
</dbReference>
<dbReference type="Proteomes" id="UP000000427">
    <property type="component" value="Chromosome"/>
</dbReference>
<dbReference type="Proteomes" id="UP000000594">
    <property type="component" value="Chromosome"/>
</dbReference>
<dbReference type="GO" id="GO:0043716">
    <property type="term" value="F:2-hydroxy-3-keto-5-methylthiopentenyl-1-phosphate phosphatase activity"/>
    <property type="evidence" value="ECO:0007669"/>
    <property type="project" value="UniProtKB-UniRule"/>
</dbReference>
<dbReference type="GO" id="GO:0019509">
    <property type="term" value="P:L-methionine salvage from methylthioadenosine"/>
    <property type="evidence" value="ECO:0007669"/>
    <property type="project" value="UniProtKB-UniRule"/>
</dbReference>
<dbReference type="CDD" id="cd07524">
    <property type="entry name" value="HAD_Pase"/>
    <property type="match status" value="1"/>
</dbReference>
<dbReference type="Gene3D" id="3.90.1470.20">
    <property type="match status" value="1"/>
</dbReference>
<dbReference type="Gene3D" id="3.40.50.1000">
    <property type="entry name" value="HAD superfamily/HAD-like"/>
    <property type="match status" value="1"/>
</dbReference>
<dbReference type="HAMAP" id="MF_01680">
    <property type="entry name" value="Salvage_MtnX"/>
    <property type="match status" value="1"/>
</dbReference>
<dbReference type="InterPro" id="IPR050849">
    <property type="entry name" value="HAD-like_hydrolase_phosphatase"/>
</dbReference>
<dbReference type="InterPro" id="IPR036412">
    <property type="entry name" value="HAD-like_sf"/>
</dbReference>
<dbReference type="InterPro" id="IPR017718">
    <property type="entry name" value="HAD-SF_hydro_IB_MtnX"/>
</dbReference>
<dbReference type="InterPro" id="IPR006384">
    <property type="entry name" value="HAD_hydro_PyrdxlP_Pase-like"/>
</dbReference>
<dbReference type="InterPro" id="IPR023214">
    <property type="entry name" value="HAD_sf"/>
</dbReference>
<dbReference type="NCBIfam" id="TIGR01489">
    <property type="entry name" value="DKMTPPase-SF"/>
    <property type="match status" value="1"/>
</dbReference>
<dbReference type="NCBIfam" id="TIGR01488">
    <property type="entry name" value="HAD-SF-IB"/>
    <property type="match status" value="1"/>
</dbReference>
<dbReference type="NCBIfam" id="NF007103">
    <property type="entry name" value="PRK09552.1"/>
    <property type="match status" value="1"/>
</dbReference>
<dbReference type="NCBIfam" id="TIGR03333">
    <property type="entry name" value="salvage_mtnX"/>
    <property type="match status" value="1"/>
</dbReference>
<dbReference type="PANTHER" id="PTHR28181:SF2">
    <property type="entry name" value="PHOSPHORIC MONOESTER HYDROLASE"/>
    <property type="match status" value="1"/>
</dbReference>
<dbReference type="PANTHER" id="PTHR28181">
    <property type="entry name" value="UPF0655 PROTEIN YCR015C"/>
    <property type="match status" value="1"/>
</dbReference>
<dbReference type="Pfam" id="PF12710">
    <property type="entry name" value="HAD"/>
    <property type="match status" value="1"/>
</dbReference>
<dbReference type="SUPFAM" id="SSF56784">
    <property type="entry name" value="HAD-like"/>
    <property type="match status" value="1"/>
</dbReference>